<name>IF2_COXBR</name>
<keyword id="KW-0963">Cytoplasm</keyword>
<keyword id="KW-0342">GTP-binding</keyword>
<keyword id="KW-0396">Initiation factor</keyword>
<keyword id="KW-0547">Nucleotide-binding</keyword>
<keyword id="KW-0648">Protein biosynthesis</keyword>
<accession>A9N8V6</accession>
<evidence type="ECO:0000250" key="1"/>
<evidence type="ECO:0000255" key="2">
    <source>
        <dbReference type="HAMAP-Rule" id="MF_00100"/>
    </source>
</evidence>
<evidence type="ECO:0000256" key="3">
    <source>
        <dbReference type="SAM" id="MobiDB-lite"/>
    </source>
</evidence>
<protein>
    <recommendedName>
        <fullName evidence="2">Translation initiation factor IF-2</fullName>
    </recommendedName>
</protein>
<comment type="function">
    <text evidence="2">One of the essential components for the initiation of protein synthesis. Protects formylmethionyl-tRNA from spontaneous hydrolysis and promotes its binding to the 30S ribosomal subunits. Also involved in the hydrolysis of GTP during the formation of the 70S ribosomal complex.</text>
</comment>
<comment type="subcellular location">
    <subcellularLocation>
        <location evidence="2">Cytoplasm</location>
    </subcellularLocation>
</comment>
<comment type="similarity">
    <text evidence="2">Belongs to the TRAFAC class translation factor GTPase superfamily. Classic translation factor GTPase family. IF-2 subfamily.</text>
</comment>
<reference key="1">
    <citation type="submission" date="2007-11" db="EMBL/GenBank/DDBJ databases">
        <title>Genome sequencing of phylogenetically and phenotypically diverse Coxiella burnetii isolates.</title>
        <authorList>
            <person name="Seshadri R."/>
            <person name="Samuel J.E."/>
        </authorList>
    </citation>
    <scope>NUCLEOTIDE SEQUENCE [LARGE SCALE GENOMIC DNA]</scope>
    <source>
        <strain>RSA 331 / Henzerling II</strain>
    </source>
</reference>
<dbReference type="EMBL" id="CP000890">
    <property type="protein sequence ID" value="ABX77509.1"/>
    <property type="molecule type" value="Genomic_DNA"/>
</dbReference>
<dbReference type="RefSeq" id="WP_012220657.1">
    <property type="nucleotide sequence ID" value="NC_010117.1"/>
</dbReference>
<dbReference type="SMR" id="A9N8V6"/>
<dbReference type="KEGG" id="cbs:COXBURSA331_A1600"/>
<dbReference type="HOGENOM" id="CLU_006301_6_0_6"/>
<dbReference type="GO" id="GO:0005829">
    <property type="term" value="C:cytosol"/>
    <property type="evidence" value="ECO:0007669"/>
    <property type="project" value="TreeGrafter"/>
</dbReference>
<dbReference type="GO" id="GO:0005525">
    <property type="term" value="F:GTP binding"/>
    <property type="evidence" value="ECO:0007669"/>
    <property type="project" value="UniProtKB-KW"/>
</dbReference>
<dbReference type="GO" id="GO:0003924">
    <property type="term" value="F:GTPase activity"/>
    <property type="evidence" value="ECO:0007669"/>
    <property type="project" value="UniProtKB-UniRule"/>
</dbReference>
<dbReference type="GO" id="GO:0003743">
    <property type="term" value="F:translation initiation factor activity"/>
    <property type="evidence" value="ECO:0007669"/>
    <property type="project" value="UniProtKB-UniRule"/>
</dbReference>
<dbReference type="CDD" id="cd01887">
    <property type="entry name" value="IF2_eIF5B"/>
    <property type="match status" value="1"/>
</dbReference>
<dbReference type="CDD" id="cd03702">
    <property type="entry name" value="IF2_mtIF2_II"/>
    <property type="match status" value="1"/>
</dbReference>
<dbReference type="CDD" id="cd03692">
    <property type="entry name" value="mtIF2_IVc"/>
    <property type="match status" value="1"/>
</dbReference>
<dbReference type="FunFam" id="2.40.30.10:FF:000007">
    <property type="entry name" value="Translation initiation factor IF-2"/>
    <property type="match status" value="1"/>
</dbReference>
<dbReference type="FunFam" id="2.40.30.10:FF:000008">
    <property type="entry name" value="Translation initiation factor IF-2"/>
    <property type="match status" value="1"/>
</dbReference>
<dbReference type="FunFam" id="3.40.50.10050:FF:000001">
    <property type="entry name" value="Translation initiation factor IF-2"/>
    <property type="match status" value="1"/>
</dbReference>
<dbReference type="FunFam" id="3.40.50.300:FF:000019">
    <property type="entry name" value="Translation initiation factor IF-2"/>
    <property type="match status" value="1"/>
</dbReference>
<dbReference type="Gene3D" id="3.40.50.300">
    <property type="entry name" value="P-loop containing nucleotide triphosphate hydrolases"/>
    <property type="match status" value="1"/>
</dbReference>
<dbReference type="Gene3D" id="3.30.56.50">
    <property type="entry name" value="Putative DNA-binding domain, N-terminal subdomain of bacterial translation initiation factor IF2"/>
    <property type="match status" value="1"/>
</dbReference>
<dbReference type="Gene3D" id="2.40.30.10">
    <property type="entry name" value="Translation factors"/>
    <property type="match status" value="2"/>
</dbReference>
<dbReference type="Gene3D" id="3.40.50.10050">
    <property type="entry name" value="Translation initiation factor IF- 2, domain 3"/>
    <property type="match status" value="1"/>
</dbReference>
<dbReference type="HAMAP" id="MF_00100_B">
    <property type="entry name" value="IF_2_B"/>
    <property type="match status" value="1"/>
</dbReference>
<dbReference type="InterPro" id="IPR009061">
    <property type="entry name" value="DNA-bd_dom_put_sf"/>
</dbReference>
<dbReference type="InterPro" id="IPR053905">
    <property type="entry name" value="EF-G-like_DII"/>
</dbReference>
<dbReference type="InterPro" id="IPR044145">
    <property type="entry name" value="IF2_II"/>
</dbReference>
<dbReference type="InterPro" id="IPR006847">
    <property type="entry name" value="IF2_N"/>
</dbReference>
<dbReference type="InterPro" id="IPR027417">
    <property type="entry name" value="P-loop_NTPase"/>
</dbReference>
<dbReference type="InterPro" id="IPR005225">
    <property type="entry name" value="Small_GTP-bd"/>
</dbReference>
<dbReference type="InterPro" id="IPR000795">
    <property type="entry name" value="T_Tr_GTP-bd_dom"/>
</dbReference>
<dbReference type="InterPro" id="IPR000178">
    <property type="entry name" value="TF_IF2_bacterial-like"/>
</dbReference>
<dbReference type="InterPro" id="IPR015760">
    <property type="entry name" value="TIF_IF2"/>
</dbReference>
<dbReference type="InterPro" id="IPR023115">
    <property type="entry name" value="TIF_IF2_dom3"/>
</dbReference>
<dbReference type="InterPro" id="IPR036925">
    <property type="entry name" value="TIF_IF2_dom3_sf"/>
</dbReference>
<dbReference type="InterPro" id="IPR009000">
    <property type="entry name" value="Transl_B-barrel_sf"/>
</dbReference>
<dbReference type="NCBIfam" id="TIGR00487">
    <property type="entry name" value="IF-2"/>
    <property type="match status" value="1"/>
</dbReference>
<dbReference type="NCBIfam" id="TIGR00231">
    <property type="entry name" value="small_GTP"/>
    <property type="match status" value="1"/>
</dbReference>
<dbReference type="PANTHER" id="PTHR43381:SF5">
    <property type="entry name" value="TR-TYPE G DOMAIN-CONTAINING PROTEIN"/>
    <property type="match status" value="1"/>
</dbReference>
<dbReference type="PANTHER" id="PTHR43381">
    <property type="entry name" value="TRANSLATION INITIATION FACTOR IF-2-RELATED"/>
    <property type="match status" value="1"/>
</dbReference>
<dbReference type="Pfam" id="PF22042">
    <property type="entry name" value="EF-G_D2"/>
    <property type="match status" value="1"/>
</dbReference>
<dbReference type="Pfam" id="PF00009">
    <property type="entry name" value="GTP_EFTU"/>
    <property type="match status" value="1"/>
</dbReference>
<dbReference type="Pfam" id="PF11987">
    <property type="entry name" value="IF-2"/>
    <property type="match status" value="1"/>
</dbReference>
<dbReference type="Pfam" id="PF04760">
    <property type="entry name" value="IF2_N"/>
    <property type="match status" value="2"/>
</dbReference>
<dbReference type="SUPFAM" id="SSF52156">
    <property type="entry name" value="Initiation factor IF2/eIF5b, domain 3"/>
    <property type="match status" value="1"/>
</dbReference>
<dbReference type="SUPFAM" id="SSF52540">
    <property type="entry name" value="P-loop containing nucleoside triphosphate hydrolases"/>
    <property type="match status" value="1"/>
</dbReference>
<dbReference type="SUPFAM" id="SSF46955">
    <property type="entry name" value="Putative DNA-binding domain"/>
    <property type="match status" value="1"/>
</dbReference>
<dbReference type="SUPFAM" id="SSF50447">
    <property type="entry name" value="Translation proteins"/>
    <property type="match status" value="2"/>
</dbReference>
<dbReference type="PROSITE" id="PS51722">
    <property type="entry name" value="G_TR_2"/>
    <property type="match status" value="1"/>
</dbReference>
<dbReference type="PROSITE" id="PS01176">
    <property type="entry name" value="IF2"/>
    <property type="match status" value="1"/>
</dbReference>
<sequence>MADMSVKQLADLVRTTPERLLEQLKEAGVAITHVDQTISDEEKRKLLLHLKTSHSTETDKKRSKIVLKRKKLSVVKSGKKSVNVEIRSKRTYTKPVVEQKRETEPAPTQEVPLTSDTTNLNEKAEVNVATLEKAVEAEVKEEAKKTPSEKKETPKKGPRKETRRSRKPDKEDKWEREELHMTKLVEERRRRHKPAHMPDSDSASAKLEQGFARPTAPVVREVALPESITVADLAQKMSVKAAEVIKAMMKLGAMVTINQRIDQETAAIVVEEMGHKPKLIKEDVLEENLVATLGEQTGEAVPRAPVVTIMGHVDHGKTSLLDYIRRTKVTSTEAGGITQHIGAYHVETELGMITFLDTPGHEAFTAMRARGAKCTDIVVLVVAADDGVMPQTVEAIQHARAAKVPVVVAVNKIDKPEADPERIKTELSTHDVLPEEWGGDTMFQPISAKTGEGIDALLERILLQAEVLELKAVDNGPARGMVVESRLDRGRGPVATVLVTSGELHLGDILLVGREYGRVRAMIGDDGRPCESAGPSMPVEVLGLSGTSVAGEEAIVVPDERKAREIARFRQGKYREVRLAKKQTAHLERIFDRMGEGKQNTLNIVLKADVQGSLEALTEALNKLSTDEVKVNIIASGVGGITESDVNLAIASDAVVIGFNVRADAPTRVLVEREGVDLRYYSIIYDLIDEVKKALSGLLAPEFEEKIVGLAEVRDVFRSSKIGAIAGCMVVEGVVRRHLPIRVLRDNVVIYEGQLESLRRYKEDVAEVRQGTECGIGVKNYNDVKVGDQIEVYEKTQVHRTIA</sequence>
<gene>
    <name evidence="2" type="primary">infB</name>
    <name type="ordered locus">COXBURSA331_A1600</name>
</gene>
<proteinExistence type="inferred from homology"/>
<organism>
    <name type="scientific">Coxiella burnetii (strain RSA 331 / Henzerling II)</name>
    <dbReference type="NCBI Taxonomy" id="360115"/>
    <lineage>
        <taxon>Bacteria</taxon>
        <taxon>Pseudomonadati</taxon>
        <taxon>Pseudomonadota</taxon>
        <taxon>Gammaproteobacteria</taxon>
        <taxon>Legionellales</taxon>
        <taxon>Coxiellaceae</taxon>
        <taxon>Coxiella</taxon>
    </lineage>
</organism>
<feature type="chain" id="PRO_1000075602" description="Translation initiation factor IF-2">
    <location>
        <begin position="1"/>
        <end position="803"/>
    </location>
</feature>
<feature type="domain" description="tr-type G">
    <location>
        <begin position="302"/>
        <end position="471"/>
    </location>
</feature>
<feature type="region of interest" description="Disordered" evidence="3">
    <location>
        <begin position="95"/>
        <end position="125"/>
    </location>
</feature>
<feature type="region of interest" description="Disordered" evidence="3">
    <location>
        <begin position="138"/>
        <end position="178"/>
    </location>
</feature>
<feature type="region of interest" description="G1" evidence="1">
    <location>
        <begin position="311"/>
        <end position="318"/>
    </location>
</feature>
<feature type="region of interest" description="G2" evidence="1">
    <location>
        <begin position="336"/>
        <end position="340"/>
    </location>
</feature>
<feature type="region of interest" description="G3" evidence="1">
    <location>
        <begin position="357"/>
        <end position="360"/>
    </location>
</feature>
<feature type="region of interest" description="G4" evidence="1">
    <location>
        <begin position="411"/>
        <end position="414"/>
    </location>
</feature>
<feature type="region of interest" description="G5" evidence="1">
    <location>
        <begin position="447"/>
        <end position="449"/>
    </location>
</feature>
<feature type="compositionally biased region" description="Polar residues" evidence="3">
    <location>
        <begin position="111"/>
        <end position="121"/>
    </location>
</feature>
<feature type="compositionally biased region" description="Basic and acidic residues" evidence="3">
    <location>
        <begin position="138"/>
        <end position="155"/>
    </location>
</feature>
<feature type="compositionally biased region" description="Basic residues" evidence="3">
    <location>
        <begin position="156"/>
        <end position="167"/>
    </location>
</feature>
<feature type="compositionally biased region" description="Basic and acidic residues" evidence="3">
    <location>
        <begin position="168"/>
        <end position="178"/>
    </location>
</feature>
<feature type="binding site" evidence="2">
    <location>
        <begin position="311"/>
        <end position="318"/>
    </location>
    <ligand>
        <name>GTP</name>
        <dbReference type="ChEBI" id="CHEBI:37565"/>
    </ligand>
</feature>
<feature type="binding site" evidence="2">
    <location>
        <begin position="357"/>
        <end position="361"/>
    </location>
    <ligand>
        <name>GTP</name>
        <dbReference type="ChEBI" id="CHEBI:37565"/>
    </ligand>
</feature>
<feature type="binding site" evidence="2">
    <location>
        <begin position="411"/>
        <end position="414"/>
    </location>
    <ligand>
        <name>GTP</name>
        <dbReference type="ChEBI" id="CHEBI:37565"/>
    </ligand>
</feature>